<keyword id="KW-0997">Cell inner membrane</keyword>
<keyword id="KW-1003">Cell membrane</keyword>
<keyword id="KW-0472">Membrane</keyword>
<keyword id="KW-0520">NAD</keyword>
<keyword id="KW-0874">Quinone</keyword>
<keyword id="KW-1185">Reference proteome</keyword>
<keyword id="KW-1278">Translocase</keyword>
<keyword id="KW-0812">Transmembrane</keyword>
<keyword id="KW-1133">Transmembrane helix</keyword>
<keyword id="KW-0813">Transport</keyword>
<keyword id="KW-0830">Ubiquinone</keyword>
<feature type="chain" id="PRO_0000391087" description="NADH-quinone oxidoreductase subunit N 2">
    <location>
        <begin position="1"/>
        <end position="494"/>
    </location>
</feature>
<feature type="transmembrane region" description="Helical" evidence="1">
    <location>
        <begin position="14"/>
        <end position="34"/>
    </location>
</feature>
<feature type="transmembrane region" description="Helical" evidence="1">
    <location>
        <begin position="45"/>
        <end position="65"/>
    </location>
</feature>
<feature type="transmembrane region" description="Helical" evidence="1">
    <location>
        <begin position="82"/>
        <end position="102"/>
    </location>
</feature>
<feature type="transmembrane region" description="Helical" evidence="1">
    <location>
        <begin position="116"/>
        <end position="136"/>
    </location>
</feature>
<feature type="transmembrane region" description="Helical" evidence="1">
    <location>
        <begin position="139"/>
        <end position="159"/>
    </location>
</feature>
<feature type="transmembrane region" description="Helical" evidence="1">
    <location>
        <begin position="174"/>
        <end position="194"/>
    </location>
</feature>
<feature type="transmembrane region" description="Helical" evidence="1">
    <location>
        <begin position="214"/>
        <end position="234"/>
    </location>
</feature>
<feature type="transmembrane region" description="Helical" evidence="1">
    <location>
        <begin position="262"/>
        <end position="282"/>
    </location>
</feature>
<feature type="transmembrane region" description="Helical" evidence="1">
    <location>
        <begin position="289"/>
        <end position="309"/>
    </location>
</feature>
<feature type="transmembrane region" description="Helical" evidence="1">
    <location>
        <begin position="317"/>
        <end position="337"/>
    </location>
</feature>
<feature type="transmembrane region" description="Helical" evidence="1">
    <location>
        <begin position="344"/>
        <end position="364"/>
    </location>
</feature>
<feature type="transmembrane region" description="Helical" evidence="1">
    <location>
        <begin position="388"/>
        <end position="408"/>
    </location>
</feature>
<feature type="transmembrane region" description="Helical" evidence="1">
    <location>
        <begin position="422"/>
        <end position="442"/>
    </location>
</feature>
<feature type="transmembrane region" description="Helical" evidence="1">
    <location>
        <begin position="470"/>
        <end position="490"/>
    </location>
</feature>
<reference key="1">
    <citation type="journal article" date="2009" name="Appl. Environ. Microbiol.">
        <title>Three genomes from the phylum Acidobacteria provide insight into the lifestyles of these microorganisms in soils.</title>
        <authorList>
            <person name="Ward N.L."/>
            <person name="Challacombe J.F."/>
            <person name="Janssen P.H."/>
            <person name="Henrissat B."/>
            <person name="Coutinho P.M."/>
            <person name="Wu M."/>
            <person name="Xie G."/>
            <person name="Haft D.H."/>
            <person name="Sait M."/>
            <person name="Badger J."/>
            <person name="Barabote R.D."/>
            <person name="Bradley B."/>
            <person name="Brettin T.S."/>
            <person name="Brinkac L.M."/>
            <person name="Bruce D."/>
            <person name="Creasy T."/>
            <person name="Daugherty S.C."/>
            <person name="Davidsen T.M."/>
            <person name="DeBoy R.T."/>
            <person name="Detter J.C."/>
            <person name="Dodson R.J."/>
            <person name="Durkin A.S."/>
            <person name="Ganapathy A."/>
            <person name="Gwinn-Giglio M."/>
            <person name="Han C.S."/>
            <person name="Khouri H."/>
            <person name="Kiss H."/>
            <person name="Kothari S.P."/>
            <person name="Madupu R."/>
            <person name="Nelson K.E."/>
            <person name="Nelson W.C."/>
            <person name="Paulsen I."/>
            <person name="Penn K."/>
            <person name="Ren Q."/>
            <person name="Rosovitz M.J."/>
            <person name="Selengut J.D."/>
            <person name="Shrivastava S."/>
            <person name="Sullivan S.A."/>
            <person name="Tapia R."/>
            <person name="Thompson L.S."/>
            <person name="Watkins K.L."/>
            <person name="Yang Q."/>
            <person name="Yu C."/>
            <person name="Zafar N."/>
            <person name="Zhou L."/>
            <person name="Kuske C.R."/>
        </authorList>
    </citation>
    <scope>NUCLEOTIDE SEQUENCE [LARGE SCALE GENOMIC DNA]</scope>
    <source>
        <strain>ATCC 51196 / DSM 11244 / BCRC 80197 / JCM 7670 / NBRC 15755 / NCIMB 13165 / 161</strain>
    </source>
</reference>
<dbReference type="EC" id="7.1.1.-" evidence="1"/>
<dbReference type="EMBL" id="CP001472">
    <property type="protein sequence ID" value="ACO32185.1"/>
    <property type="molecule type" value="Genomic_DNA"/>
</dbReference>
<dbReference type="RefSeq" id="WP_015897644.1">
    <property type="nucleotide sequence ID" value="NC_012483.1"/>
</dbReference>
<dbReference type="SMR" id="C1F223"/>
<dbReference type="FunCoup" id="C1F223">
    <property type="interactions" value="135"/>
</dbReference>
<dbReference type="STRING" id="240015.ACP_2576"/>
<dbReference type="KEGG" id="aca:ACP_2576"/>
<dbReference type="eggNOG" id="COG1007">
    <property type="taxonomic scope" value="Bacteria"/>
</dbReference>
<dbReference type="HOGENOM" id="CLU_007100_1_4_0"/>
<dbReference type="InParanoid" id="C1F223"/>
<dbReference type="OrthoDB" id="9807568at2"/>
<dbReference type="Proteomes" id="UP000002207">
    <property type="component" value="Chromosome"/>
</dbReference>
<dbReference type="GO" id="GO:0005886">
    <property type="term" value="C:plasma membrane"/>
    <property type="evidence" value="ECO:0007669"/>
    <property type="project" value="UniProtKB-SubCell"/>
</dbReference>
<dbReference type="GO" id="GO:0008137">
    <property type="term" value="F:NADH dehydrogenase (ubiquinone) activity"/>
    <property type="evidence" value="ECO:0007669"/>
    <property type="project" value="InterPro"/>
</dbReference>
<dbReference type="GO" id="GO:0050136">
    <property type="term" value="F:NADH:ubiquinone reductase (non-electrogenic) activity"/>
    <property type="evidence" value="ECO:0007669"/>
    <property type="project" value="UniProtKB-UniRule"/>
</dbReference>
<dbReference type="GO" id="GO:0048038">
    <property type="term" value="F:quinone binding"/>
    <property type="evidence" value="ECO:0007669"/>
    <property type="project" value="UniProtKB-KW"/>
</dbReference>
<dbReference type="GO" id="GO:0042773">
    <property type="term" value="P:ATP synthesis coupled electron transport"/>
    <property type="evidence" value="ECO:0007669"/>
    <property type="project" value="InterPro"/>
</dbReference>
<dbReference type="HAMAP" id="MF_00445">
    <property type="entry name" value="NDH1_NuoN_1"/>
    <property type="match status" value="1"/>
</dbReference>
<dbReference type="InterPro" id="IPR010096">
    <property type="entry name" value="NADH-Q_OxRdtase_suN/2"/>
</dbReference>
<dbReference type="InterPro" id="IPR001750">
    <property type="entry name" value="ND/Mrp_TM"/>
</dbReference>
<dbReference type="NCBIfam" id="TIGR01770">
    <property type="entry name" value="NDH_I_N"/>
    <property type="match status" value="1"/>
</dbReference>
<dbReference type="PANTHER" id="PTHR22773">
    <property type="entry name" value="NADH DEHYDROGENASE"/>
    <property type="match status" value="1"/>
</dbReference>
<dbReference type="Pfam" id="PF00361">
    <property type="entry name" value="Proton_antipo_M"/>
    <property type="match status" value="1"/>
</dbReference>
<name>NUON2_ACIC5</name>
<evidence type="ECO:0000255" key="1">
    <source>
        <dbReference type="HAMAP-Rule" id="MF_00445"/>
    </source>
</evidence>
<accession>C1F223</accession>
<comment type="function">
    <text evidence="1">NDH-1 shuttles electrons from NADH, via FMN and iron-sulfur (Fe-S) centers, to quinones in the respiratory chain. The immediate electron acceptor for the enzyme in this species is believed to be ubiquinone. Couples the redox reaction to proton translocation (for every two electrons transferred, four hydrogen ions are translocated across the cytoplasmic membrane), and thus conserves the redox energy in a proton gradient.</text>
</comment>
<comment type="catalytic activity">
    <reaction evidence="1">
        <text>a quinone + NADH + 5 H(+)(in) = a quinol + NAD(+) + 4 H(+)(out)</text>
        <dbReference type="Rhea" id="RHEA:57888"/>
        <dbReference type="ChEBI" id="CHEBI:15378"/>
        <dbReference type="ChEBI" id="CHEBI:24646"/>
        <dbReference type="ChEBI" id="CHEBI:57540"/>
        <dbReference type="ChEBI" id="CHEBI:57945"/>
        <dbReference type="ChEBI" id="CHEBI:132124"/>
    </reaction>
</comment>
<comment type="subunit">
    <text evidence="1">NDH-1 is composed of 14 different subunits. Subunits NuoA, H, J, K, L, M, N constitute the membrane sector of the complex.</text>
</comment>
<comment type="subcellular location">
    <subcellularLocation>
        <location evidence="1">Cell inner membrane</location>
        <topology evidence="1">Multi-pass membrane protein</topology>
    </subcellularLocation>
</comment>
<comment type="similarity">
    <text evidence="1">Belongs to the complex I subunit 2 family.</text>
</comment>
<gene>
    <name evidence="1" type="primary">nuoN2</name>
    <name type="ordered locus">ACP_2576</name>
</gene>
<proteinExistence type="inferred from homology"/>
<sequence>MNPVSYSELLRLTLPQIALTVAAFFVLACDGMLLRRSPIAVRARIAMLLSVAGSLVALALLPLTAPVQLLDGMLVLDARTGVVQVVLLLFTLAVTLLSGSVLAQQGREVSAFTTHIGEFFALLLFATVAALFLVSTQNLLLIFLAVEFLSLVLYILTAFNKHSRASAEAALKYFLFGGMSAGFLLFGISLLYGVSGSLDLQQIALAASQPDSLLLVAIVLVILGFGFKIAAAPFHLWAPDAYQGAPSLSAGFIASSSKVASFFVFAQVLFIGVASASGNAAWHLSAPGWMPILAAVAVLSMLLGNLAALAQTSLRRLLAYSAIGHAGYLLLGLIAHTPQSLAALLYYVFTYALAVLGAFGVLAILETNGIDSLSSLAGLSRRSPALSACLLVFLLSLAGIPPLVGFFAKFWLFAAALQAAPAFGLLWLVILAILMSVVALFYYLRVLRQVYVVPMAEDATPLSSPTLARITLLVMAALTLLLGCAPNLLMRWLR</sequence>
<organism>
    <name type="scientific">Acidobacterium capsulatum (strain ATCC 51196 / DSM 11244 / BCRC 80197 / JCM 7670 / NBRC 15755 / NCIMB 13165 / 161)</name>
    <dbReference type="NCBI Taxonomy" id="240015"/>
    <lineage>
        <taxon>Bacteria</taxon>
        <taxon>Pseudomonadati</taxon>
        <taxon>Acidobacteriota</taxon>
        <taxon>Terriglobia</taxon>
        <taxon>Terriglobales</taxon>
        <taxon>Acidobacteriaceae</taxon>
        <taxon>Acidobacterium</taxon>
    </lineage>
</organism>
<protein>
    <recommendedName>
        <fullName evidence="1">NADH-quinone oxidoreductase subunit N 2</fullName>
        <ecNumber evidence="1">7.1.1.-</ecNumber>
    </recommendedName>
    <alternativeName>
        <fullName evidence="1">NADH dehydrogenase I subunit N 2</fullName>
    </alternativeName>
    <alternativeName>
        <fullName evidence="1">NDH-1 subunit N 2</fullName>
    </alternativeName>
</protein>